<protein>
    <recommendedName>
        <fullName>D-inositol 3-phosphate glycosyltransferase</fullName>
        <ecNumber evidence="1">2.4.1.250</ecNumber>
    </recommendedName>
    <alternativeName>
        <fullName evidence="1">N-acetylglucosamine-inositol-phosphate N-acetylglucosaminyltransferase</fullName>
        <shortName evidence="1">GlcNAc-Ins-P N-acetylglucosaminyltransferase</shortName>
    </alternativeName>
</protein>
<name>MSHA_RHOOB</name>
<evidence type="ECO:0000255" key="1">
    <source>
        <dbReference type="HAMAP-Rule" id="MF_01695"/>
    </source>
</evidence>
<feature type="chain" id="PRO_0000400151" description="D-inositol 3-phosphate glycosyltransferase">
    <location>
        <begin position="1"/>
        <end position="446"/>
    </location>
</feature>
<feature type="binding site" evidence="1">
    <location>
        <position position="19"/>
    </location>
    <ligand>
        <name>1D-myo-inositol 3-phosphate</name>
        <dbReference type="ChEBI" id="CHEBI:58401"/>
    </ligand>
</feature>
<feature type="binding site" evidence="1">
    <location>
        <begin position="25"/>
        <end position="26"/>
    </location>
    <ligand>
        <name>UDP-N-acetyl-alpha-D-glucosamine</name>
        <dbReference type="ChEBI" id="CHEBI:57705"/>
    </ligand>
</feature>
<feature type="binding site" evidence="1">
    <location>
        <begin position="30"/>
        <end position="35"/>
    </location>
    <ligand>
        <name>1D-myo-inositol 3-phosphate</name>
        <dbReference type="ChEBI" id="CHEBI:58401"/>
    </ligand>
</feature>
<feature type="binding site" evidence="1">
    <location>
        <position position="33"/>
    </location>
    <ligand>
        <name>UDP-N-acetyl-alpha-D-glucosamine</name>
        <dbReference type="ChEBI" id="CHEBI:57705"/>
    </ligand>
</feature>
<feature type="binding site" evidence="1">
    <location>
        <position position="88"/>
    </location>
    <ligand>
        <name>1D-myo-inositol 3-phosphate</name>
        <dbReference type="ChEBI" id="CHEBI:58401"/>
    </ligand>
</feature>
<feature type="binding site" evidence="1">
    <location>
        <position position="121"/>
    </location>
    <ligand>
        <name>1D-myo-inositol 3-phosphate</name>
        <dbReference type="ChEBI" id="CHEBI:58401"/>
    </ligand>
</feature>
<feature type="binding site" evidence="1">
    <location>
        <position position="145"/>
    </location>
    <ligand>
        <name>1D-myo-inositol 3-phosphate</name>
        <dbReference type="ChEBI" id="CHEBI:58401"/>
    </ligand>
</feature>
<feature type="binding site" evidence="1">
    <location>
        <position position="165"/>
    </location>
    <ligand>
        <name>1D-myo-inositol 3-phosphate</name>
        <dbReference type="ChEBI" id="CHEBI:58401"/>
    </ligand>
</feature>
<feature type="binding site" evidence="1">
    <location>
        <position position="239"/>
    </location>
    <ligand>
        <name>UDP-N-acetyl-alpha-D-glucosamine</name>
        <dbReference type="ChEBI" id="CHEBI:57705"/>
    </ligand>
</feature>
<feature type="binding site" evidence="1">
    <location>
        <position position="244"/>
    </location>
    <ligand>
        <name>UDP-N-acetyl-alpha-D-glucosamine</name>
        <dbReference type="ChEBI" id="CHEBI:57705"/>
    </ligand>
</feature>
<feature type="binding site" evidence="1">
    <location>
        <position position="303"/>
    </location>
    <ligand>
        <name>UDP-N-acetyl-alpha-D-glucosamine</name>
        <dbReference type="ChEBI" id="CHEBI:57705"/>
    </ligand>
</feature>
<feature type="binding site" evidence="1">
    <location>
        <position position="312"/>
    </location>
    <ligand>
        <name>Mg(2+)</name>
        <dbReference type="ChEBI" id="CHEBI:18420"/>
    </ligand>
</feature>
<feature type="binding site" evidence="1">
    <location>
        <position position="313"/>
    </location>
    <ligand>
        <name>Mg(2+)</name>
        <dbReference type="ChEBI" id="CHEBI:18420"/>
    </ligand>
</feature>
<feature type="binding site" evidence="1">
    <location>
        <position position="315"/>
    </location>
    <ligand>
        <name>Mg(2+)</name>
        <dbReference type="ChEBI" id="CHEBI:18420"/>
    </ligand>
</feature>
<feature type="binding site" evidence="1">
    <location>
        <position position="325"/>
    </location>
    <ligand>
        <name>UDP-N-acetyl-alpha-D-glucosamine</name>
        <dbReference type="ChEBI" id="CHEBI:57705"/>
    </ligand>
</feature>
<feature type="binding site" evidence="1">
    <location>
        <position position="333"/>
    </location>
    <ligand>
        <name>UDP-N-acetyl-alpha-D-glucosamine</name>
        <dbReference type="ChEBI" id="CHEBI:57705"/>
    </ligand>
</feature>
<feature type="binding site" evidence="1">
    <location>
        <position position="339"/>
    </location>
    <ligand>
        <name>Mg(2+)</name>
        <dbReference type="ChEBI" id="CHEBI:18420"/>
    </ligand>
</feature>
<comment type="function">
    <text evidence="1">Catalyzes the transfer of a N-acetyl-glucosamine moiety to 1D-myo-inositol 3-phosphate to produce 1D-myo-inositol 2-acetamido-2-deoxy-glucopyranoside 3-phosphate in the mycothiol biosynthesis pathway.</text>
</comment>
<comment type="catalytic activity">
    <reaction evidence="1">
        <text>1D-myo-inositol 3-phosphate + UDP-N-acetyl-alpha-D-glucosamine = 1D-myo-inositol 2-acetamido-2-deoxy-alpha-D-glucopyranoside 3-phosphate + UDP + H(+)</text>
        <dbReference type="Rhea" id="RHEA:26188"/>
        <dbReference type="ChEBI" id="CHEBI:15378"/>
        <dbReference type="ChEBI" id="CHEBI:57705"/>
        <dbReference type="ChEBI" id="CHEBI:58223"/>
        <dbReference type="ChEBI" id="CHEBI:58401"/>
        <dbReference type="ChEBI" id="CHEBI:58892"/>
        <dbReference type="EC" id="2.4.1.250"/>
    </reaction>
</comment>
<comment type="subunit">
    <text evidence="1">Homodimer.</text>
</comment>
<comment type="similarity">
    <text evidence="1">Belongs to the glycosyltransferase group 1 family. MshA subfamily.</text>
</comment>
<reference key="1">
    <citation type="submission" date="2009-03" db="EMBL/GenBank/DDBJ databases">
        <title>Comparison of the complete genome sequences of Rhodococcus erythropolis PR4 and Rhodococcus opacus B4.</title>
        <authorList>
            <person name="Takarada H."/>
            <person name="Sekine M."/>
            <person name="Hosoyama A."/>
            <person name="Yamada R."/>
            <person name="Fujisawa T."/>
            <person name="Omata S."/>
            <person name="Shimizu A."/>
            <person name="Tsukatani N."/>
            <person name="Tanikawa S."/>
            <person name="Fujita N."/>
            <person name="Harayama S."/>
        </authorList>
    </citation>
    <scope>NUCLEOTIDE SEQUENCE [LARGE SCALE GENOMIC DNA]</scope>
    <source>
        <strain>B4</strain>
    </source>
</reference>
<keyword id="KW-0328">Glycosyltransferase</keyword>
<keyword id="KW-0460">Magnesium</keyword>
<keyword id="KW-0479">Metal-binding</keyword>
<keyword id="KW-0808">Transferase</keyword>
<accession>C1AZ64</accession>
<dbReference type="EC" id="2.4.1.250" evidence="1"/>
<dbReference type="EMBL" id="AP011115">
    <property type="protein sequence ID" value="BAH49992.1"/>
    <property type="molecule type" value="Genomic_DNA"/>
</dbReference>
<dbReference type="SMR" id="C1AZ64"/>
<dbReference type="STRING" id="632772.ROP_17450"/>
<dbReference type="CAZy" id="GT4">
    <property type="family name" value="Glycosyltransferase Family 4"/>
</dbReference>
<dbReference type="KEGG" id="rop:ROP_17450"/>
<dbReference type="PATRIC" id="fig|632772.20.peg.1829"/>
<dbReference type="HOGENOM" id="CLU_009583_2_3_11"/>
<dbReference type="Proteomes" id="UP000002212">
    <property type="component" value="Chromosome"/>
</dbReference>
<dbReference type="GO" id="GO:0008375">
    <property type="term" value="F:acetylglucosaminyltransferase activity"/>
    <property type="evidence" value="ECO:0007669"/>
    <property type="project" value="UniProtKB-UniRule"/>
</dbReference>
<dbReference type="GO" id="GO:0102710">
    <property type="term" value="F:D-inositol-3-phosphate glycosyltransferase activity"/>
    <property type="evidence" value="ECO:0007669"/>
    <property type="project" value="UniProtKB-EC"/>
</dbReference>
<dbReference type="GO" id="GO:0000287">
    <property type="term" value="F:magnesium ion binding"/>
    <property type="evidence" value="ECO:0007669"/>
    <property type="project" value="UniProtKB-UniRule"/>
</dbReference>
<dbReference type="GO" id="GO:0010125">
    <property type="term" value="P:mycothiol biosynthetic process"/>
    <property type="evidence" value="ECO:0007669"/>
    <property type="project" value="UniProtKB-UniRule"/>
</dbReference>
<dbReference type="CDD" id="cd03800">
    <property type="entry name" value="GT4_sucrose_synthase"/>
    <property type="match status" value="1"/>
</dbReference>
<dbReference type="Gene3D" id="3.40.50.2000">
    <property type="entry name" value="Glycogen Phosphorylase B"/>
    <property type="match status" value="2"/>
</dbReference>
<dbReference type="HAMAP" id="MF_01695">
    <property type="entry name" value="MshA"/>
    <property type="match status" value="1"/>
</dbReference>
<dbReference type="InterPro" id="IPR001296">
    <property type="entry name" value="Glyco_trans_1"/>
</dbReference>
<dbReference type="InterPro" id="IPR028098">
    <property type="entry name" value="Glyco_trans_4-like_N"/>
</dbReference>
<dbReference type="InterPro" id="IPR017814">
    <property type="entry name" value="Mycothiol_biosynthesis_MshA"/>
</dbReference>
<dbReference type="NCBIfam" id="TIGR03449">
    <property type="entry name" value="mycothiol_MshA"/>
    <property type="match status" value="1"/>
</dbReference>
<dbReference type="PANTHER" id="PTHR12526:SF510">
    <property type="entry name" value="D-INOSITOL 3-PHOSPHATE GLYCOSYLTRANSFERASE"/>
    <property type="match status" value="1"/>
</dbReference>
<dbReference type="PANTHER" id="PTHR12526">
    <property type="entry name" value="GLYCOSYLTRANSFERASE"/>
    <property type="match status" value="1"/>
</dbReference>
<dbReference type="Pfam" id="PF13579">
    <property type="entry name" value="Glyco_trans_4_4"/>
    <property type="match status" value="1"/>
</dbReference>
<dbReference type="Pfam" id="PF00534">
    <property type="entry name" value="Glycos_transf_1"/>
    <property type="match status" value="1"/>
</dbReference>
<dbReference type="SUPFAM" id="SSF53756">
    <property type="entry name" value="UDP-Glycosyltransferase/glycogen phosphorylase"/>
    <property type="match status" value="1"/>
</dbReference>
<proteinExistence type="inferred from homology"/>
<gene>
    <name evidence="1" type="primary">mshA</name>
    <name type="ordered locus">ROP_17450</name>
</gene>
<organism>
    <name type="scientific">Rhodococcus opacus (strain B4)</name>
    <dbReference type="NCBI Taxonomy" id="632772"/>
    <lineage>
        <taxon>Bacteria</taxon>
        <taxon>Bacillati</taxon>
        <taxon>Actinomycetota</taxon>
        <taxon>Actinomycetes</taxon>
        <taxon>Mycobacteriales</taxon>
        <taxon>Nocardiaceae</taxon>
        <taxon>Rhodococcus</taxon>
    </lineage>
</organism>
<sequence>MVTPLHNSRPRRVAVLSVHTSPLAQPGTGDAGGMNVYVLQSAIQMARRGVEVEIFTRATSSADAPVQEAAPGVLVRNVVAGPFEGLDKQDLPTQLCAFVAGVLREEARHEPGYYNLVHSHYWLSGQVGWLARDRWGVPLVHTAHTLAAVKNLSLAEGDTPEPAARQIGEQQVVAESDRLVANTTEESDQLVRHYGADPNRIDVVAPGADLTRYRPGDRDAARATLGLDPRETVVTFVGRIQPLKAPDVLLRAAAELIARDPASSLRVLVVGGPSGSGLARPDALIELASSLGIAARVTFLPPQAPDRLADVYRASDLVAVPSYSESFGLVAIEAQACGTPVIAANVGGLGVAVRSGETGLLVDGHRTEDWATALQSLVSEPARLAALAAEAPRHAENFSWEHTADGLLESYRMATVNYNYGHGPSEFSPRRGRGLWKLRRAGGVRA</sequence>